<organism>
    <name type="scientific">Streptococcus pyogenes serotype M4 (strain MGAS10750)</name>
    <dbReference type="NCBI Taxonomy" id="370554"/>
    <lineage>
        <taxon>Bacteria</taxon>
        <taxon>Bacillati</taxon>
        <taxon>Bacillota</taxon>
        <taxon>Bacilli</taxon>
        <taxon>Lactobacillales</taxon>
        <taxon>Streptococcaceae</taxon>
        <taxon>Streptococcus</taxon>
    </lineage>
</organism>
<proteinExistence type="inferred from homology"/>
<keyword id="KW-0963">Cytoplasm</keyword>
<keyword id="KW-0342">GTP-binding</keyword>
<keyword id="KW-0396">Initiation factor</keyword>
<keyword id="KW-0547">Nucleotide-binding</keyword>
<keyword id="KW-0648">Protein biosynthesis</keyword>
<protein>
    <recommendedName>
        <fullName evidence="2">Translation initiation factor IF-2</fullName>
    </recommendedName>
</protein>
<dbReference type="EMBL" id="CP000262">
    <property type="protein sequence ID" value="ABF38472.1"/>
    <property type="molecule type" value="Genomic_DNA"/>
</dbReference>
<dbReference type="SMR" id="Q1J5B4"/>
<dbReference type="KEGG" id="spi:MGAS10750_Spy1522"/>
<dbReference type="HOGENOM" id="CLU_006301_5_0_9"/>
<dbReference type="Proteomes" id="UP000002434">
    <property type="component" value="Chromosome"/>
</dbReference>
<dbReference type="GO" id="GO:0005829">
    <property type="term" value="C:cytosol"/>
    <property type="evidence" value="ECO:0007669"/>
    <property type="project" value="TreeGrafter"/>
</dbReference>
<dbReference type="GO" id="GO:0005525">
    <property type="term" value="F:GTP binding"/>
    <property type="evidence" value="ECO:0007669"/>
    <property type="project" value="UniProtKB-KW"/>
</dbReference>
<dbReference type="GO" id="GO:0003924">
    <property type="term" value="F:GTPase activity"/>
    <property type="evidence" value="ECO:0007669"/>
    <property type="project" value="UniProtKB-UniRule"/>
</dbReference>
<dbReference type="GO" id="GO:0003743">
    <property type="term" value="F:translation initiation factor activity"/>
    <property type="evidence" value="ECO:0007669"/>
    <property type="project" value="UniProtKB-UniRule"/>
</dbReference>
<dbReference type="CDD" id="cd01887">
    <property type="entry name" value="IF2_eIF5B"/>
    <property type="match status" value="1"/>
</dbReference>
<dbReference type="CDD" id="cd03702">
    <property type="entry name" value="IF2_mtIF2_II"/>
    <property type="match status" value="1"/>
</dbReference>
<dbReference type="CDD" id="cd03692">
    <property type="entry name" value="mtIF2_IVc"/>
    <property type="match status" value="1"/>
</dbReference>
<dbReference type="FunFam" id="2.40.30.10:FF:000007">
    <property type="entry name" value="Translation initiation factor IF-2"/>
    <property type="match status" value="1"/>
</dbReference>
<dbReference type="FunFam" id="2.40.30.10:FF:000008">
    <property type="entry name" value="Translation initiation factor IF-2"/>
    <property type="match status" value="1"/>
</dbReference>
<dbReference type="FunFam" id="3.40.50.10050:FF:000001">
    <property type="entry name" value="Translation initiation factor IF-2"/>
    <property type="match status" value="1"/>
</dbReference>
<dbReference type="FunFam" id="3.40.50.300:FF:000019">
    <property type="entry name" value="Translation initiation factor IF-2"/>
    <property type="match status" value="1"/>
</dbReference>
<dbReference type="Gene3D" id="1.10.10.2480">
    <property type="match status" value="1"/>
</dbReference>
<dbReference type="Gene3D" id="3.40.50.300">
    <property type="entry name" value="P-loop containing nucleotide triphosphate hydrolases"/>
    <property type="match status" value="1"/>
</dbReference>
<dbReference type="Gene3D" id="2.40.30.10">
    <property type="entry name" value="Translation factors"/>
    <property type="match status" value="2"/>
</dbReference>
<dbReference type="Gene3D" id="3.40.50.10050">
    <property type="entry name" value="Translation initiation factor IF- 2, domain 3"/>
    <property type="match status" value="1"/>
</dbReference>
<dbReference type="HAMAP" id="MF_00100_B">
    <property type="entry name" value="IF_2_B"/>
    <property type="match status" value="1"/>
</dbReference>
<dbReference type="InterPro" id="IPR053905">
    <property type="entry name" value="EF-G-like_DII"/>
</dbReference>
<dbReference type="InterPro" id="IPR044145">
    <property type="entry name" value="IF2_II"/>
</dbReference>
<dbReference type="InterPro" id="IPR006847">
    <property type="entry name" value="IF2_N"/>
</dbReference>
<dbReference type="InterPro" id="IPR027417">
    <property type="entry name" value="P-loop_NTPase"/>
</dbReference>
<dbReference type="InterPro" id="IPR005225">
    <property type="entry name" value="Small_GTP-bd"/>
</dbReference>
<dbReference type="InterPro" id="IPR000795">
    <property type="entry name" value="T_Tr_GTP-bd_dom"/>
</dbReference>
<dbReference type="InterPro" id="IPR000178">
    <property type="entry name" value="TF_IF2_bacterial-like"/>
</dbReference>
<dbReference type="InterPro" id="IPR015760">
    <property type="entry name" value="TIF_IF2"/>
</dbReference>
<dbReference type="InterPro" id="IPR023115">
    <property type="entry name" value="TIF_IF2_dom3"/>
</dbReference>
<dbReference type="InterPro" id="IPR036925">
    <property type="entry name" value="TIF_IF2_dom3_sf"/>
</dbReference>
<dbReference type="InterPro" id="IPR009000">
    <property type="entry name" value="Transl_B-barrel_sf"/>
</dbReference>
<dbReference type="NCBIfam" id="TIGR00487">
    <property type="entry name" value="IF-2"/>
    <property type="match status" value="1"/>
</dbReference>
<dbReference type="NCBIfam" id="TIGR00231">
    <property type="entry name" value="small_GTP"/>
    <property type="match status" value="1"/>
</dbReference>
<dbReference type="PANTHER" id="PTHR43381:SF5">
    <property type="entry name" value="TR-TYPE G DOMAIN-CONTAINING PROTEIN"/>
    <property type="match status" value="1"/>
</dbReference>
<dbReference type="PANTHER" id="PTHR43381">
    <property type="entry name" value="TRANSLATION INITIATION FACTOR IF-2-RELATED"/>
    <property type="match status" value="1"/>
</dbReference>
<dbReference type="Pfam" id="PF22042">
    <property type="entry name" value="EF-G_D2"/>
    <property type="match status" value="1"/>
</dbReference>
<dbReference type="Pfam" id="PF00009">
    <property type="entry name" value="GTP_EFTU"/>
    <property type="match status" value="1"/>
</dbReference>
<dbReference type="Pfam" id="PF11987">
    <property type="entry name" value="IF-2"/>
    <property type="match status" value="1"/>
</dbReference>
<dbReference type="Pfam" id="PF04760">
    <property type="entry name" value="IF2_N"/>
    <property type="match status" value="2"/>
</dbReference>
<dbReference type="PRINTS" id="PR00449">
    <property type="entry name" value="RASTRNSFRMNG"/>
</dbReference>
<dbReference type="SUPFAM" id="SSF52156">
    <property type="entry name" value="Initiation factor IF2/eIF5b, domain 3"/>
    <property type="match status" value="1"/>
</dbReference>
<dbReference type="SUPFAM" id="SSF52540">
    <property type="entry name" value="P-loop containing nucleoside triphosphate hydrolases"/>
    <property type="match status" value="1"/>
</dbReference>
<dbReference type="SUPFAM" id="SSF50447">
    <property type="entry name" value="Translation proteins"/>
    <property type="match status" value="2"/>
</dbReference>
<dbReference type="PROSITE" id="PS51722">
    <property type="entry name" value="G_TR_2"/>
    <property type="match status" value="1"/>
</dbReference>
<dbReference type="PROSITE" id="PS01176">
    <property type="entry name" value="IF2"/>
    <property type="match status" value="1"/>
</dbReference>
<sequence>MSKKRLHEIAKEIGKSSKEVVEHAKYLGLDVKSHASSVEEADAKKIISSFSKASKPDVTASQTVKPKEVAQPSVTVVKETGSEHVEKTQVSKPKSRNFKAEREARAKEQAARKQANGSSHRSQERRGGYRQPNNHQTNEQGDKRITHRSQGDTNDKRIDRKASNVSPRHDNHQLVGDRNRSFAKENHKNGRFTNQKKQGRQEPQSKSPKIDFKARAAALKAEQNAEYSRQSETRFRAQQEAKRLAELARQEAKEAALKAQAEEMSHREAALKSIEEAETKLKSSNISAKSTADNRRKKQARPEKNRELTHHSQEGQKKNKKSWNSQNQVRNQKNSNWNKNKKTKKGKNVKNTNTAPKPVTERKFHELPKEFEYTEGMTVAEIAKRIKREPAEIVKKLFMMGVMATQNQSLDGDTIELLMVDYGIEAKAKVEVDDADIERFFEDENYLNPENIVERAPVVTIMGHVDHGKTTLLDTLRNSRVATGEAGGITQHIGAYQIEEAGKKITFLDTPGHAAFTSMRARGASVTDITILIVAADDGVMPQTIEAINHSKAAGVPIIVAINKIDKPGANPERVIAELAEYGIISTAWGGECEFVEISAKFNKNIDELLETVLLVAEVEELKADPTVRAIGTVIEARLDKGKGAIATLLVQQGTLHVQDPIVVGNTFGRVRAMVNDLGRRVKSAEPSTPVSITGLNETPMAGDHFAVYADEKAARAAGEERSKRALLKQRQNTQRVSLDNLFDTLKAGEIKTVNVIIKADVQGSVEALAASLVKIEVEGVRVNVVHSAVGAINESDVTLAEASNAVIIGFNVRPTPQARQQADTDDVEIRLHSIIYKVIEEVEEAMKGKLDPVYQEKVLGEAIIRETFKVSKVGTIGGFMVINGKVTRDSSVRVIRDSVVIFDGKLASLKHYKDDVKEVGNAQEGGLMIENFNDLKVDDTIEAYIMEEIVRK</sequence>
<comment type="function">
    <text evidence="2">One of the essential components for the initiation of protein synthesis. Protects formylmethionyl-tRNA from spontaneous hydrolysis and promotes its binding to the 30S ribosomal subunits. Also involved in the hydrolysis of GTP during the formation of the 70S ribosomal complex.</text>
</comment>
<comment type="subcellular location">
    <subcellularLocation>
        <location evidence="2">Cytoplasm</location>
    </subcellularLocation>
</comment>
<comment type="similarity">
    <text evidence="2">Belongs to the TRAFAC class translation factor GTPase superfamily. Classic translation factor GTPase family. IF-2 subfamily.</text>
</comment>
<gene>
    <name evidence="2" type="primary">infB</name>
    <name type="ordered locus">MGAS10750_Spy1522</name>
</gene>
<reference key="1">
    <citation type="journal article" date="2006" name="Proc. Natl. Acad. Sci. U.S.A.">
        <title>Molecular genetic anatomy of inter- and intraserotype variation in the human bacterial pathogen group A Streptococcus.</title>
        <authorList>
            <person name="Beres S.B."/>
            <person name="Richter E.W."/>
            <person name="Nagiec M.J."/>
            <person name="Sumby P."/>
            <person name="Porcella S.F."/>
            <person name="DeLeo F.R."/>
            <person name="Musser J.M."/>
        </authorList>
    </citation>
    <scope>NUCLEOTIDE SEQUENCE [LARGE SCALE GENOMIC DNA]</scope>
    <source>
        <strain>MGAS10750</strain>
    </source>
</reference>
<evidence type="ECO:0000250" key="1"/>
<evidence type="ECO:0000255" key="2">
    <source>
        <dbReference type="HAMAP-Rule" id="MF_00100"/>
    </source>
</evidence>
<evidence type="ECO:0000256" key="3">
    <source>
        <dbReference type="SAM" id="MobiDB-lite"/>
    </source>
</evidence>
<name>IF2_STRPF</name>
<accession>Q1J5B4</accession>
<feature type="chain" id="PRO_1000008352" description="Translation initiation factor IF-2">
    <location>
        <begin position="1"/>
        <end position="953"/>
    </location>
</feature>
<feature type="domain" description="tr-type G">
    <location>
        <begin position="454"/>
        <end position="623"/>
    </location>
</feature>
<feature type="region of interest" description="Disordered" evidence="3">
    <location>
        <begin position="52"/>
        <end position="241"/>
    </location>
</feature>
<feature type="region of interest" description="Disordered" evidence="3">
    <location>
        <begin position="279"/>
        <end position="363"/>
    </location>
</feature>
<feature type="region of interest" description="G1" evidence="1">
    <location>
        <begin position="463"/>
        <end position="470"/>
    </location>
</feature>
<feature type="region of interest" description="G2" evidence="1">
    <location>
        <begin position="488"/>
        <end position="492"/>
    </location>
</feature>
<feature type="region of interest" description="G3" evidence="1">
    <location>
        <begin position="509"/>
        <end position="512"/>
    </location>
</feature>
<feature type="region of interest" description="G4" evidence="1">
    <location>
        <begin position="563"/>
        <end position="566"/>
    </location>
</feature>
<feature type="region of interest" description="G5" evidence="1">
    <location>
        <begin position="599"/>
        <end position="601"/>
    </location>
</feature>
<feature type="compositionally biased region" description="Basic and acidic residues" evidence="3">
    <location>
        <begin position="80"/>
        <end position="89"/>
    </location>
</feature>
<feature type="compositionally biased region" description="Basic and acidic residues" evidence="3">
    <location>
        <begin position="98"/>
        <end position="111"/>
    </location>
</feature>
<feature type="compositionally biased region" description="Basic and acidic residues" evidence="3">
    <location>
        <begin position="140"/>
        <end position="188"/>
    </location>
</feature>
<feature type="compositionally biased region" description="Polar residues" evidence="3">
    <location>
        <begin position="191"/>
        <end position="207"/>
    </location>
</feature>
<feature type="compositionally biased region" description="Basic and acidic residues" evidence="3">
    <location>
        <begin position="229"/>
        <end position="241"/>
    </location>
</feature>
<feature type="compositionally biased region" description="Polar residues" evidence="3">
    <location>
        <begin position="282"/>
        <end position="291"/>
    </location>
</feature>
<feature type="compositionally biased region" description="Basic and acidic residues" evidence="3">
    <location>
        <begin position="300"/>
        <end position="317"/>
    </location>
</feature>
<feature type="compositionally biased region" description="Low complexity" evidence="3">
    <location>
        <begin position="322"/>
        <end position="338"/>
    </location>
</feature>
<feature type="compositionally biased region" description="Basic residues" evidence="3">
    <location>
        <begin position="339"/>
        <end position="348"/>
    </location>
</feature>
<feature type="binding site" evidence="2">
    <location>
        <begin position="463"/>
        <end position="470"/>
    </location>
    <ligand>
        <name>GTP</name>
        <dbReference type="ChEBI" id="CHEBI:37565"/>
    </ligand>
</feature>
<feature type="binding site" evidence="2">
    <location>
        <begin position="509"/>
        <end position="513"/>
    </location>
    <ligand>
        <name>GTP</name>
        <dbReference type="ChEBI" id="CHEBI:37565"/>
    </ligand>
</feature>
<feature type="binding site" evidence="2">
    <location>
        <begin position="563"/>
        <end position="566"/>
    </location>
    <ligand>
        <name>GTP</name>
        <dbReference type="ChEBI" id="CHEBI:37565"/>
    </ligand>
</feature>